<sequence>MDKIIKSIAQSGAFRAYVLDSTETVALAQEKHNTLSSSTVALGRTLIANQILAANQKGDSKITVKVIGDSSFGHIISVADTKGHVKGYIQNTGVDIKKTATGEVLVGPFMGNGHFVTIIDYGTGNPYTSTTPLITGEIGEDFAYYLTESEQTPSAIGLNVLLDENDKVKVAGGFMVQVLPEASEEEIARYEKRLQEMPAISHLLASKNHVDALLEAIYGDEPYKRLSEEPLSFQCDCSRERFEAALMTLPKADLQAMIDEDKGAEIVCQFCGTKYQFNESDLEAIINDKA</sequence>
<feature type="chain" id="PRO_1000095035" description="33 kDa chaperonin">
    <location>
        <begin position="1"/>
        <end position="290"/>
    </location>
</feature>
<feature type="disulfide bond" description="Redox-active" evidence="1">
    <location>
        <begin position="235"/>
        <end position="237"/>
    </location>
</feature>
<feature type="disulfide bond" description="Redox-active" evidence="1">
    <location>
        <begin position="268"/>
        <end position="271"/>
    </location>
</feature>
<name>HSLO_STRPZ</name>
<gene>
    <name evidence="1" type="primary">hslO</name>
    <name type="ordered locus">Spy49_0110c</name>
</gene>
<reference key="1">
    <citation type="journal article" date="2008" name="J. Bacteriol.">
        <title>Genome sequence of a nephritogenic and highly transformable M49 strain of Streptococcus pyogenes.</title>
        <authorList>
            <person name="McShan W.M."/>
            <person name="Ferretti J.J."/>
            <person name="Karasawa T."/>
            <person name="Suvorov A.N."/>
            <person name="Lin S."/>
            <person name="Qin B."/>
            <person name="Jia H."/>
            <person name="Kenton S."/>
            <person name="Najar F."/>
            <person name="Wu H."/>
            <person name="Scott J."/>
            <person name="Roe B.A."/>
            <person name="Savic D.J."/>
        </authorList>
    </citation>
    <scope>NUCLEOTIDE SEQUENCE [LARGE SCALE GENOMIC DNA]</scope>
    <source>
        <strain>NZ131</strain>
    </source>
</reference>
<proteinExistence type="inferred from homology"/>
<keyword id="KW-0143">Chaperone</keyword>
<keyword id="KW-0963">Cytoplasm</keyword>
<keyword id="KW-1015">Disulfide bond</keyword>
<keyword id="KW-0676">Redox-active center</keyword>
<keyword id="KW-0862">Zinc</keyword>
<protein>
    <recommendedName>
        <fullName evidence="1">33 kDa chaperonin</fullName>
    </recommendedName>
    <alternativeName>
        <fullName evidence="1">Heat shock protein 33 homolog</fullName>
        <shortName evidence="1">HSP33</shortName>
    </alternativeName>
</protein>
<evidence type="ECO:0000255" key="1">
    <source>
        <dbReference type="HAMAP-Rule" id="MF_00117"/>
    </source>
</evidence>
<dbReference type="EMBL" id="CP000829">
    <property type="protein sequence ID" value="ACI60461.1"/>
    <property type="molecule type" value="Genomic_DNA"/>
</dbReference>
<dbReference type="SMR" id="B5XJE9"/>
<dbReference type="KEGG" id="soz:Spy49_0110c"/>
<dbReference type="HOGENOM" id="CLU_054493_1_0_9"/>
<dbReference type="Proteomes" id="UP000001039">
    <property type="component" value="Chromosome"/>
</dbReference>
<dbReference type="GO" id="GO:0005737">
    <property type="term" value="C:cytoplasm"/>
    <property type="evidence" value="ECO:0007669"/>
    <property type="project" value="UniProtKB-SubCell"/>
</dbReference>
<dbReference type="GO" id="GO:0044183">
    <property type="term" value="F:protein folding chaperone"/>
    <property type="evidence" value="ECO:0007669"/>
    <property type="project" value="TreeGrafter"/>
</dbReference>
<dbReference type="GO" id="GO:0051082">
    <property type="term" value="F:unfolded protein binding"/>
    <property type="evidence" value="ECO:0007669"/>
    <property type="project" value="UniProtKB-UniRule"/>
</dbReference>
<dbReference type="GO" id="GO:0042026">
    <property type="term" value="P:protein refolding"/>
    <property type="evidence" value="ECO:0007669"/>
    <property type="project" value="TreeGrafter"/>
</dbReference>
<dbReference type="CDD" id="cd00498">
    <property type="entry name" value="Hsp33"/>
    <property type="match status" value="1"/>
</dbReference>
<dbReference type="Gene3D" id="3.55.30.10">
    <property type="entry name" value="Hsp33 domain"/>
    <property type="match status" value="1"/>
</dbReference>
<dbReference type="Gene3D" id="3.90.1280.10">
    <property type="entry name" value="HSP33 redox switch-like"/>
    <property type="match status" value="1"/>
</dbReference>
<dbReference type="HAMAP" id="MF_00117">
    <property type="entry name" value="HslO"/>
    <property type="match status" value="1"/>
</dbReference>
<dbReference type="InterPro" id="IPR000397">
    <property type="entry name" value="Heat_shock_Hsp33"/>
</dbReference>
<dbReference type="InterPro" id="IPR016154">
    <property type="entry name" value="Heat_shock_Hsp33_C"/>
</dbReference>
<dbReference type="InterPro" id="IPR016153">
    <property type="entry name" value="Heat_shock_Hsp33_N"/>
</dbReference>
<dbReference type="NCBIfam" id="NF001033">
    <property type="entry name" value="PRK00114.1"/>
    <property type="match status" value="1"/>
</dbReference>
<dbReference type="PANTHER" id="PTHR30111">
    <property type="entry name" value="33 KDA CHAPERONIN"/>
    <property type="match status" value="1"/>
</dbReference>
<dbReference type="PANTHER" id="PTHR30111:SF1">
    <property type="entry name" value="33 KDA CHAPERONIN"/>
    <property type="match status" value="1"/>
</dbReference>
<dbReference type="Pfam" id="PF01430">
    <property type="entry name" value="HSP33"/>
    <property type="match status" value="1"/>
</dbReference>
<dbReference type="PIRSF" id="PIRSF005261">
    <property type="entry name" value="Heat_shock_Hsp33"/>
    <property type="match status" value="1"/>
</dbReference>
<dbReference type="SUPFAM" id="SSF64397">
    <property type="entry name" value="Hsp33 domain"/>
    <property type="match status" value="1"/>
</dbReference>
<dbReference type="SUPFAM" id="SSF118352">
    <property type="entry name" value="HSP33 redox switch-like"/>
    <property type="match status" value="1"/>
</dbReference>
<accession>B5XJE9</accession>
<comment type="function">
    <text evidence="1">Redox regulated molecular chaperone. Protects both thermally unfolding and oxidatively damaged proteins from irreversible aggregation. Plays an important role in the bacterial defense system toward oxidative stress.</text>
</comment>
<comment type="subcellular location">
    <subcellularLocation>
        <location evidence="1">Cytoplasm</location>
    </subcellularLocation>
</comment>
<comment type="PTM">
    <text evidence="1">Under oxidizing conditions two disulfide bonds are formed involving the reactive cysteines. Under reducing conditions zinc is bound to the reactive cysteines and the protein is inactive.</text>
</comment>
<comment type="similarity">
    <text evidence="1">Belongs to the HSP33 family.</text>
</comment>
<organism>
    <name type="scientific">Streptococcus pyogenes serotype M49 (strain NZ131)</name>
    <dbReference type="NCBI Taxonomy" id="471876"/>
    <lineage>
        <taxon>Bacteria</taxon>
        <taxon>Bacillati</taxon>
        <taxon>Bacillota</taxon>
        <taxon>Bacilli</taxon>
        <taxon>Lactobacillales</taxon>
        <taxon>Streptococcaceae</taxon>
        <taxon>Streptococcus</taxon>
    </lineage>
</organism>